<dbReference type="EC" id="3.1.13.-"/>
<dbReference type="EMBL" id="Z70718">
    <property type="protein sequence ID" value="CAA94677.2"/>
    <property type="molecule type" value="Genomic_DNA"/>
</dbReference>
<dbReference type="PIR" id="T18925">
    <property type="entry name" value="T18925"/>
</dbReference>
<dbReference type="RefSeq" id="NP_501835.2">
    <property type="nucleotide sequence ID" value="NM_069434.6"/>
</dbReference>
<dbReference type="SMR" id="Q17632"/>
<dbReference type="BioGRID" id="42978">
    <property type="interactions" value="8"/>
</dbReference>
<dbReference type="FunCoup" id="Q17632">
    <property type="interactions" value="2975"/>
</dbReference>
<dbReference type="STRING" id="6239.C04G2.6.2"/>
<dbReference type="PaxDb" id="6239-C04G2.6"/>
<dbReference type="PeptideAtlas" id="Q17632"/>
<dbReference type="EnsemblMetazoa" id="C04G2.6.1">
    <property type="protein sequence ID" value="C04G2.6.1"/>
    <property type="gene ID" value="WBGene00001001"/>
</dbReference>
<dbReference type="GeneID" id="177875"/>
<dbReference type="KEGG" id="cel:CELE_C04G2.6"/>
<dbReference type="UCSC" id="C04G2.6">
    <property type="organism name" value="c. elegans"/>
</dbReference>
<dbReference type="AGR" id="WB:WBGene00001001"/>
<dbReference type="CTD" id="177875"/>
<dbReference type="WormBase" id="C04G2.6">
    <property type="protein sequence ID" value="CE42607"/>
    <property type="gene ID" value="WBGene00001001"/>
    <property type="gene designation" value="dis-3"/>
</dbReference>
<dbReference type="eggNOG" id="KOG2102">
    <property type="taxonomic scope" value="Eukaryota"/>
</dbReference>
<dbReference type="GeneTree" id="ENSGT00530000063106"/>
<dbReference type="HOGENOM" id="CLU_002333_5_0_1"/>
<dbReference type="InParanoid" id="Q17632"/>
<dbReference type="OMA" id="GQVMRNN"/>
<dbReference type="OrthoDB" id="372421at2759"/>
<dbReference type="PhylomeDB" id="Q17632"/>
<dbReference type="Reactome" id="R-CEL-429958">
    <property type="pathway name" value="mRNA decay by 3' to 5' exoribonuclease"/>
</dbReference>
<dbReference type="Reactome" id="R-CEL-450385">
    <property type="pathway name" value="Butyrate Response Factor 1 (BRF1) binds and destabilizes mRNA"/>
</dbReference>
<dbReference type="Reactome" id="R-CEL-450513">
    <property type="pathway name" value="Tristetraprolin (TTP, ZFP36) binds and destabilizes mRNA"/>
</dbReference>
<dbReference type="PRO" id="PR:Q17632"/>
<dbReference type="Proteomes" id="UP000001940">
    <property type="component" value="Chromosome IV"/>
</dbReference>
<dbReference type="Bgee" id="WBGene00001001">
    <property type="expression patterns" value="Expressed in germ line (C elegans) and 4 other cell types or tissues"/>
</dbReference>
<dbReference type="GO" id="GO:0000177">
    <property type="term" value="C:cytoplasmic exosome (RNase complex)"/>
    <property type="evidence" value="ECO:0000318"/>
    <property type="project" value="GO_Central"/>
</dbReference>
<dbReference type="GO" id="GO:0000176">
    <property type="term" value="C:nuclear exosome (RNase complex)"/>
    <property type="evidence" value="ECO:0000318"/>
    <property type="project" value="GO_Central"/>
</dbReference>
<dbReference type="GO" id="GO:0005654">
    <property type="term" value="C:nucleoplasm"/>
    <property type="evidence" value="ECO:0007669"/>
    <property type="project" value="UniProtKB-SubCell"/>
</dbReference>
<dbReference type="GO" id="GO:0000175">
    <property type="term" value="F:3'-5'-RNA exonuclease activity"/>
    <property type="evidence" value="ECO:0000318"/>
    <property type="project" value="GO_Central"/>
</dbReference>
<dbReference type="GO" id="GO:0004519">
    <property type="term" value="F:endonuclease activity"/>
    <property type="evidence" value="ECO:0000318"/>
    <property type="project" value="GO_Central"/>
</dbReference>
<dbReference type="GO" id="GO:0003723">
    <property type="term" value="F:RNA binding"/>
    <property type="evidence" value="ECO:0007669"/>
    <property type="project" value="UniProtKB-KW"/>
</dbReference>
<dbReference type="GO" id="GO:0071031">
    <property type="term" value="P:nuclear mRNA surveillance of mRNA 3'-end processing"/>
    <property type="evidence" value="ECO:0000318"/>
    <property type="project" value="GO_Central"/>
</dbReference>
<dbReference type="GO" id="GO:0016075">
    <property type="term" value="P:rRNA catabolic process"/>
    <property type="evidence" value="ECO:0000318"/>
    <property type="project" value="GO_Central"/>
</dbReference>
<dbReference type="GO" id="GO:0006364">
    <property type="term" value="P:rRNA processing"/>
    <property type="evidence" value="ECO:0007669"/>
    <property type="project" value="UniProtKB-KW"/>
</dbReference>
<dbReference type="CDD" id="cd09862">
    <property type="entry name" value="PIN_Rrp44-like"/>
    <property type="match status" value="1"/>
</dbReference>
<dbReference type="FunFam" id="2.40.50.700:FF:000001">
    <property type="entry name" value="Exosome complex exonuclease exoribonuclease (Rrp44)"/>
    <property type="match status" value="1"/>
</dbReference>
<dbReference type="FunFam" id="2.40.50.690:FF:000014">
    <property type="entry name" value="Probable exosome complex exonuclease RRP44"/>
    <property type="match status" value="1"/>
</dbReference>
<dbReference type="Gene3D" id="2.40.50.690">
    <property type="match status" value="1"/>
</dbReference>
<dbReference type="Gene3D" id="2.40.50.700">
    <property type="match status" value="1"/>
</dbReference>
<dbReference type="Gene3D" id="3.40.50.1010">
    <property type="entry name" value="5'-nuclease"/>
    <property type="match status" value="1"/>
</dbReference>
<dbReference type="Gene3D" id="2.40.50.140">
    <property type="entry name" value="Nucleic acid-binding proteins"/>
    <property type="match status" value="1"/>
</dbReference>
<dbReference type="InterPro" id="IPR041505">
    <property type="entry name" value="Dis3_CSD2"/>
</dbReference>
<dbReference type="InterPro" id="IPR012340">
    <property type="entry name" value="NA-bd_OB-fold"/>
</dbReference>
<dbReference type="InterPro" id="IPR002716">
    <property type="entry name" value="PIN_dom"/>
</dbReference>
<dbReference type="InterPro" id="IPR001900">
    <property type="entry name" value="RNase_II/R"/>
</dbReference>
<dbReference type="InterPro" id="IPR022966">
    <property type="entry name" value="RNase_II/R_CS"/>
</dbReference>
<dbReference type="InterPro" id="IPR050180">
    <property type="entry name" value="RNR_Ribonuclease"/>
</dbReference>
<dbReference type="InterPro" id="IPR033771">
    <property type="entry name" value="Rrp44_CSD1"/>
</dbReference>
<dbReference type="InterPro" id="IPR033770">
    <property type="entry name" value="RRP44_S1"/>
</dbReference>
<dbReference type="PANTHER" id="PTHR23355:SF35">
    <property type="entry name" value="EXOSOME COMPLEX EXONUCLEASE RRP44"/>
    <property type="match status" value="1"/>
</dbReference>
<dbReference type="PANTHER" id="PTHR23355">
    <property type="entry name" value="RIBONUCLEASE"/>
    <property type="match status" value="1"/>
</dbReference>
<dbReference type="Pfam" id="PF17849">
    <property type="entry name" value="OB_Dis3"/>
    <property type="match status" value="1"/>
</dbReference>
<dbReference type="Pfam" id="PF00773">
    <property type="entry name" value="RNB"/>
    <property type="match status" value="1"/>
</dbReference>
<dbReference type="Pfam" id="PF17216">
    <property type="entry name" value="Rrp44_CSD1"/>
    <property type="match status" value="1"/>
</dbReference>
<dbReference type="Pfam" id="PF17215">
    <property type="entry name" value="Rrp44_S1"/>
    <property type="match status" value="1"/>
</dbReference>
<dbReference type="SMART" id="SM00670">
    <property type="entry name" value="PINc"/>
    <property type="match status" value="1"/>
</dbReference>
<dbReference type="SMART" id="SM00955">
    <property type="entry name" value="RNB"/>
    <property type="match status" value="1"/>
</dbReference>
<dbReference type="SUPFAM" id="SSF50249">
    <property type="entry name" value="Nucleic acid-binding proteins"/>
    <property type="match status" value="3"/>
</dbReference>
<dbReference type="PROSITE" id="PS01175">
    <property type="entry name" value="RIBONUCLEASE_II"/>
    <property type="match status" value="1"/>
</dbReference>
<proteinExistence type="evidence at protein level"/>
<sequence>MDLNVKQSGIHSVALHTTYFQNRSGKVYKRAEERYLRNDLSCGLAQCGTCKDFGTNPLLKIENPVRNAKVGRHALIVDSTSLIRFYDLFDSSLLRDLIVTQTVWEGVKAKAVPAYKKMNSLCYEDAKDRFHVFMNEFHCETFSESSKFEDLSRGEELLLSTALYLKTHWQKHNVAPVVLVFDEDSKKRMENHYQHVMYLKEYIQNLEDPGKQALLDQMAAYESSGNGNEKQIFDEYLSHDRIMEGIASGTIKRGNFSVSRENYREATVIIDDQLTSWFITGNNCNRAVNGDTVAVQLLPEDQWTAPEKKIRLRDVEEYVKTADDMGNEDEENDDENDEPKAKKSKKMTVSTAKVVGIIKRNWREYCGMLLPSTVKGARRHLFCPAERLIPRIRIETEQAETLSQQRIVVAIDHWPRDSKYPLGHYVRSIGEMGSRETENEVLLLEHDIPHAPFSESVLDCLPREEWEPDLTENRGPLPRVDLRDLTICSVDPLGCTDIDDALHCKQIGEDLFEVGVHIADVTHFVRPGTAIDDEAALRGTTVYLCDRRIDMLPCLLSSNLCSLRGEEERYAFSCIWTMTSSADIQSVKYHKSLIKSKAALTYEKAQEIIDDPKEQNDVALGLRGLMKLSKVLNARRTGNGALTLASSEVRFDMDWESRTPKKVMEKQHLDTHSMVEEFMLLANISVAEKILEEYPDCALLRRHPVPLKESYKPLVEAARHRGFEIIVESGKGLADSLNRCVDKKNPMLNRLLRMLTTRCMTQAVYFSAGTVPVPQYQHFGLACAIYTHFTSPIRRYADVIVHRLLAAAIGADDIQSGLLNQARCTKICTNINYRHKQAQYAGRASVQLNVVRYFKGKVETCEGFVMGVRNNGIQVFVPKYGLESIIVLQTSAASGTTIDVEEMSVKVNGDVVIKELEPVTVRISVNEKNQQRPRVELQLIKPAIPGLSVDFDLSSSEGLGL</sequence>
<organism>
    <name type="scientific">Caenorhabditis elegans</name>
    <dbReference type="NCBI Taxonomy" id="6239"/>
    <lineage>
        <taxon>Eukaryota</taxon>
        <taxon>Metazoa</taxon>
        <taxon>Ecdysozoa</taxon>
        <taxon>Nematoda</taxon>
        <taxon>Chromadorea</taxon>
        <taxon>Rhabditida</taxon>
        <taxon>Rhabditina</taxon>
        <taxon>Rhabditomorpha</taxon>
        <taxon>Rhabditoidea</taxon>
        <taxon>Rhabditidae</taxon>
        <taxon>Peloderinae</taxon>
        <taxon>Caenorhabditis</taxon>
    </lineage>
</organism>
<comment type="function">
    <text evidence="1 4">Putative catalytic component of the RNA exosome complex which has 3'-&gt;5' exoribonuclease activity and participates in a multitude of cellular RNA processing and degradation events. Has both 3'-5' exonuclease and endonuclease activities (By similarity). Involved in regulation of antisense ribosomal siRNA production (PubMed:34365510).</text>
</comment>
<comment type="subunit">
    <text evidence="1">Component of the RNA exosome complex.</text>
</comment>
<comment type="subcellular location">
    <subcellularLocation>
        <location evidence="5">Nucleus</location>
    </subcellularLocation>
    <subcellularLocation>
        <location evidence="5">Nucleus</location>
        <location evidence="5">Nucleoplasm</location>
    </subcellularLocation>
</comment>
<comment type="tissue specificity">
    <text evidence="4">Ubiquitously expressed.</text>
</comment>
<comment type="similarity">
    <text evidence="6">Belongs to the RNR ribonuclease family.</text>
</comment>
<feature type="chain" id="PRO_0000166420" description="Probable exosome complex exonuclease RRP44">
    <location>
        <begin position="1"/>
        <end position="961"/>
    </location>
</feature>
<feature type="domain" description="PINc">
    <location>
        <begin position="73"/>
        <end position="188"/>
    </location>
</feature>
<feature type="domain" description="CSD1" evidence="2">
    <location>
        <begin position="232"/>
        <end position="338"/>
    </location>
</feature>
<feature type="domain" description="CSD2" evidence="2">
    <location>
        <begin position="381"/>
        <end position="447"/>
    </location>
</feature>
<feature type="domain" description="RNB" evidence="2">
    <location>
        <begin position="479"/>
        <end position="809"/>
    </location>
</feature>
<feature type="region of interest" description="Disordered" evidence="3">
    <location>
        <begin position="322"/>
        <end position="346"/>
    </location>
</feature>
<feature type="compositionally biased region" description="Acidic residues" evidence="3">
    <location>
        <begin position="325"/>
        <end position="337"/>
    </location>
</feature>
<feature type="mutagenesis site" description="In ust56; results in increase of antisense ribosomal siRNAs production and depletion of crn-3 and exos-1 proteins from the nucleoli. Reduces the brood size when animals are grown at 20 degrees Celsius. Causes sterility when animals are grown at 25 degrees Celsius." evidence="4">
    <original>R</original>
    <variation>C</variation>
    <location>
        <position position="363"/>
    </location>
</feature>
<accession>Q17632</accession>
<name>RRP44_CAEEL</name>
<protein>
    <recommendedName>
        <fullName>Probable exosome complex exonuclease RRP44</fullName>
        <ecNumber>3.1.13.-</ecNumber>
    </recommendedName>
    <alternativeName>
        <fullName>Protein DIS3 homolog</fullName>
    </alternativeName>
    <alternativeName>
        <fullName>Ribosomal RNA-processing protein 44</fullName>
    </alternativeName>
</protein>
<reference key="1">
    <citation type="journal article" date="1998" name="Science">
        <title>Genome sequence of the nematode C. elegans: a platform for investigating biology.</title>
        <authorList>
            <consortium name="The C. elegans sequencing consortium"/>
        </authorList>
    </citation>
    <scope>NUCLEOTIDE SEQUENCE [LARGE SCALE GENOMIC DNA]</scope>
    <source>
        <strain>Bristol N2</strain>
    </source>
</reference>
<reference key="2">
    <citation type="journal article" date="2021" name="Nucleic Acids Res.">
        <title>Antisense ribosomal siRNAs inhibit RNA polymerase I-directed transcription in C. elegans.</title>
        <authorList>
            <person name="Liao S."/>
            <person name="Chen X."/>
            <person name="Xu T."/>
            <person name="Jin Q."/>
            <person name="Xu Z."/>
            <person name="Xu D."/>
            <person name="Zhou X."/>
            <person name="Zhu C."/>
            <person name="Guang S."/>
            <person name="Feng X."/>
        </authorList>
    </citation>
    <scope>FUNCTION</scope>
    <scope>TISSUE SPECIFICITY</scope>
    <scope>MUTAGENESIS OF ARG-363</scope>
</reference>
<reference key="3">
    <citation type="journal article" date="2023" name="PLoS Genet.">
        <title>A ZTF-7/RPS-2 complex mediates the cold-warm response in C. elegans.</title>
        <authorList>
            <person name="Xu T."/>
            <person name="Liao S."/>
            <person name="Huang M."/>
            <person name="Zhu C."/>
            <person name="Huang X."/>
            <person name="Jin Q."/>
            <person name="Xu D."/>
            <person name="Fu C."/>
            <person name="Chen X."/>
            <person name="Feng X."/>
            <person name="Guang S."/>
        </authorList>
    </citation>
    <scope>SUBCELLULAR LOCATION</scope>
</reference>
<evidence type="ECO:0000250" key="1">
    <source>
        <dbReference type="UniProtKB" id="Q9Y2L1"/>
    </source>
</evidence>
<evidence type="ECO:0000255" key="2"/>
<evidence type="ECO:0000256" key="3">
    <source>
        <dbReference type="SAM" id="MobiDB-lite"/>
    </source>
</evidence>
<evidence type="ECO:0000269" key="4">
    <source>
    </source>
</evidence>
<evidence type="ECO:0000269" key="5">
    <source>
    </source>
</evidence>
<evidence type="ECO:0000305" key="6"/>
<gene>
    <name type="primary">dis-3</name>
    <name type="ORF">C04G2.6</name>
</gene>
<keyword id="KW-0269">Exonuclease</keyword>
<keyword id="KW-0271">Exosome</keyword>
<keyword id="KW-0378">Hydrolase</keyword>
<keyword id="KW-0540">Nuclease</keyword>
<keyword id="KW-0539">Nucleus</keyword>
<keyword id="KW-1185">Reference proteome</keyword>
<keyword id="KW-0694">RNA-binding</keyword>
<keyword id="KW-0698">rRNA processing</keyword>